<reference key="1">
    <citation type="submission" date="2008-01" db="EMBL/GenBank/DDBJ databases">
        <title>Complete sequence of Pseudomonas putida GB-1.</title>
        <authorList>
            <consortium name="US DOE Joint Genome Institute"/>
            <person name="Copeland A."/>
            <person name="Lucas S."/>
            <person name="Lapidus A."/>
            <person name="Barry K."/>
            <person name="Glavina del Rio T."/>
            <person name="Dalin E."/>
            <person name="Tice H."/>
            <person name="Pitluck S."/>
            <person name="Bruce D."/>
            <person name="Goodwin L."/>
            <person name="Chertkov O."/>
            <person name="Brettin T."/>
            <person name="Detter J.C."/>
            <person name="Han C."/>
            <person name="Kuske C.R."/>
            <person name="Schmutz J."/>
            <person name="Larimer F."/>
            <person name="Land M."/>
            <person name="Hauser L."/>
            <person name="Kyrpides N."/>
            <person name="Kim E."/>
            <person name="McCarthy J.K."/>
            <person name="Richardson P."/>
        </authorList>
    </citation>
    <scope>NUCLEOTIDE SEQUENCE [LARGE SCALE GENOMIC DNA]</scope>
    <source>
        <strain>GB-1</strain>
    </source>
</reference>
<sequence length="367" mass="41143">MTLLKRISSPALLALALFGGAAHAALVPPQGYYEGIEKLKTGDGNFRCEAAPKPYTGALQFRSKYEGSDKARATLNVASEKAFRKSTEDITTLEKGVSKMVGQYMRDGRPAQLDCTLAWLGTWARADALLSTDYNHTGKSMRKWALGSMSGSWLRLKFSHSQPLAAHQAEAEVIEKWFARLAEQTVRDWSDLPLEKINNHSYWAAWSVMATAVATDRRDLFDWAVKEYKVGANQVDDQGFLPNEIKRKQRALAYHNYALPPLAMIASFAQANGVDLRKENNFALQRLGEGVLAGARDPSQFKARTGEKQDMKDLKVDSKYAWLEPWCELYHCVGDTLQRKHGMQPFNSFRLGGDLTRVYDPNAESKK</sequence>
<dbReference type="EC" id="4.2.2.3" evidence="1"/>
<dbReference type="EMBL" id="CP000926">
    <property type="protein sequence ID" value="ABZ00455.1"/>
    <property type="molecule type" value="Genomic_DNA"/>
</dbReference>
<dbReference type="RefSeq" id="WP_012274107.1">
    <property type="nucleotide sequence ID" value="NC_010322.1"/>
</dbReference>
<dbReference type="SMR" id="B0KGQ9"/>
<dbReference type="CAZy" id="PL5">
    <property type="family name" value="Polysaccharide Lyase Family 5"/>
</dbReference>
<dbReference type="KEGG" id="ppg:PputGB1_4568"/>
<dbReference type="eggNOG" id="ENOG502ZAMJ">
    <property type="taxonomic scope" value="Bacteria"/>
</dbReference>
<dbReference type="HOGENOM" id="CLU_064286_0_0_6"/>
<dbReference type="Proteomes" id="UP000002157">
    <property type="component" value="Chromosome"/>
</dbReference>
<dbReference type="GO" id="GO:0042597">
    <property type="term" value="C:periplasmic space"/>
    <property type="evidence" value="ECO:0007669"/>
    <property type="project" value="UniProtKB-SubCell"/>
</dbReference>
<dbReference type="GO" id="GO:0045135">
    <property type="term" value="F:poly(beta-D-mannuronate) lyase activity"/>
    <property type="evidence" value="ECO:0007669"/>
    <property type="project" value="UniProtKB-UniRule"/>
</dbReference>
<dbReference type="GO" id="GO:0042122">
    <property type="term" value="P:alginic acid catabolic process"/>
    <property type="evidence" value="ECO:0007669"/>
    <property type="project" value="UniProtKB-UniRule"/>
</dbReference>
<dbReference type="CDD" id="cd00244">
    <property type="entry name" value="AlgLyase"/>
    <property type="match status" value="1"/>
</dbReference>
<dbReference type="Gene3D" id="1.50.10.100">
    <property type="entry name" value="Chondroitin AC/alginate lyase"/>
    <property type="match status" value="1"/>
</dbReference>
<dbReference type="HAMAP" id="MF_00557">
    <property type="entry name" value="Alginate_lyase"/>
    <property type="match status" value="1"/>
</dbReference>
<dbReference type="InterPro" id="IPR022859">
    <property type="entry name" value="Alginate_lyase"/>
</dbReference>
<dbReference type="InterPro" id="IPR008397">
    <property type="entry name" value="Alginate_lyase_dom"/>
</dbReference>
<dbReference type="InterPro" id="IPR008929">
    <property type="entry name" value="Chondroitin_lyas"/>
</dbReference>
<dbReference type="NCBIfam" id="NF001467">
    <property type="entry name" value="PRK00325.1-2"/>
    <property type="match status" value="1"/>
</dbReference>
<dbReference type="NCBIfam" id="NF001470">
    <property type="entry name" value="PRK00325.1-5"/>
    <property type="match status" value="1"/>
</dbReference>
<dbReference type="Pfam" id="PF05426">
    <property type="entry name" value="Alginate_lyase"/>
    <property type="match status" value="1"/>
</dbReference>
<dbReference type="SUPFAM" id="SSF48230">
    <property type="entry name" value="Chondroitin AC/alginate lyase"/>
    <property type="match status" value="1"/>
</dbReference>
<protein>
    <recommendedName>
        <fullName evidence="1">Alginate lyase</fullName>
        <ecNumber evidence="1">4.2.2.3</ecNumber>
    </recommendedName>
    <alternativeName>
        <fullName evidence="1">Poly(beta-D-mannuronate) lyase</fullName>
    </alternativeName>
</protein>
<gene>
    <name evidence="1" type="primary">algL</name>
    <name type="ordered locus">PputGB1_4568</name>
</gene>
<organism>
    <name type="scientific">Pseudomonas putida (strain GB-1)</name>
    <dbReference type="NCBI Taxonomy" id="76869"/>
    <lineage>
        <taxon>Bacteria</taxon>
        <taxon>Pseudomonadati</taxon>
        <taxon>Pseudomonadota</taxon>
        <taxon>Gammaproteobacteria</taxon>
        <taxon>Pseudomonadales</taxon>
        <taxon>Pseudomonadaceae</taxon>
        <taxon>Pseudomonas</taxon>
    </lineage>
</organism>
<accession>B0KGQ9</accession>
<keyword id="KW-0456">Lyase</keyword>
<keyword id="KW-0574">Periplasm</keyword>
<keyword id="KW-0732">Signal</keyword>
<name>ALGL_PSEPG</name>
<evidence type="ECO:0000255" key="1">
    <source>
        <dbReference type="HAMAP-Rule" id="MF_00557"/>
    </source>
</evidence>
<feature type="signal peptide" evidence="1">
    <location>
        <begin position="1"/>
        <end position="24"/>
    </location>
</feature>
<feature type="chain" id="PRO_5000304896" description="Alginate lyase">
    <location>
        <begin position="25"/>
        <end position="367"/>
    </location>
</feature>
<feature type="binding site" evidence="1">
    <location>
        <begin position="63"/>
        <end position="64"/>
    </location>
    <ligand>
        <name>substrate</name>
    </ligand>
</feature>
<feature type="binding site" evidence="1">
    <location>
        <begin position="136"/>
        <end position="137"/>
    </location>
    <ligand>
        <name>substrate</name>
    </ligand>
</feature>
<feature type="binding site" evidence="1">
    <location>
        <position position="254"/>
    </location>
    <ligand>
        <name>substrate</name>
    </ligand>
</feature>
<comment type="function">
    <text evidence="1">Catalyzes the depolymerization of alginate by cleaving the beta-1,4 glycosidic bond between two adjacent sugar residues via a beta-elimination mechanism. May serve to degrade mislocalized alginate that is trapped in the periplasmic space.</text>
</comment>
<comment type="catalytic activity">
    <reaction evidence="1">
        <text>Eliminative cleavage of alginate to give oligosaccharides with 4-deoxy-alpha-L-erythro-hex-4-enuronosyl groups at their non-reducing ends and beta-D-mannuronate at their reducing end.</text>
        <dbReference type="EC" id="4.2.2.3"/>
    </reaction>
</comment>
<comment type="subcellular location">
    <subcellularLocation>
        <location evidence="1">Periplasm</location>
    </subcellularLocation>
</comment>
<comment type="similarity">
    <text evidence="1">Belongs to the polysaccharide lyase 5 family.</text>
</comment>
<proteinExistence type="inferred from homology"/>